<evidence type="ECO:0000250" key="1"/>
<evidence type="ECO:0000255" key="2">
    <source>
        <dbReference type="HAMAP-Rule" id="MF_00047"/>
    </source>
</evidence>
<gene>
    <name evidence="2" type="primary">ddl</name>
    <name type="ordered locus">ABBFA_000147</name>
</gene>
<protein>
    <recommendedName>
        <fullName evidence="2">D-alanine--D-alanine ligase</fullName>
        <ecNumber evidence="2">6.3.2.4</ecNumber>
    </recommendedName>
    <alternativeName>
        <fullName evidence="2">D-Ala-D-Ala ligase</fullName>
    </alternativeName>
    <alternativeName>
        <fullName evidence="2">D-alanylalanine synthetase</fullName>
    </alternativeName>
</protein>
<feature type="chain" id="PRO_1000116631" description="D-alanine--D-alanine ligase">
    <location>
        <begin position="1"/>
        <end position="308"/>
    </location>
</feature>
<feature type="domain" description="ATP-grasp" evidence="2">
    <location>
        <begin position="104"/>
        <end position="301"/>
    </location>
</feature>
<feature type="binding site" evidence="2">
    <location>
        <begin position="130"/>
        <end position="185"/>
    </location>
    <ligand>
        <name>ATP</name>
        <dbReference type="ChEBI" id="CHEBI:30616"/>
    </ligand>
</feature>
<feature type="binding site" evidence="2">
    <location>
        <position position="255"/>
    </location>
    <ligand>
        <name>Mg(2+)</name>
        <dbReference type="ChEBI" id="CHEBI:18420"/>
        <label>1</label>
    </ligand>
</feature>
<feature type="binding site" evidence="2">
    <location>
        <position position="268"/>
    </location>
    <ligand>
        <name>Mg(2+)</name>
        <dbReference type="ChEBI" id="CHEBI:18420"/>
        <label>1</label>
    </ligand>
</feature>
<feature type="binding site" evidence="2">
    <location>
        <position position="268"/>
    </location>
    <ligand>
        <name>Mg(2+)</name>
        <dbReference type="ChEBI" id="CHEBI:18420"/>
        <label>2</label>
    </ligand>
</feature>
<feature type="binding site" evidence="2">
    <location>
        <position position="270"/>
    </location>
    <ligand>
        <name>Mg(2+)</name>
        <dbReference type="ChEBI" id="CHEBI:18420"/>
        <label>2</label>
    </ligand>
</feature>
<dbReference type="EC" id="6.3.2.4" evidence="2"/>
<dbReference type="EMBL" id="CP001172">
    <property type="protein sequence ID" value="ACJ57898.1"/>
    <property type="molecule type" value="Genomic_DNA"/>
</dbReference>
<dbReference type="RefSeq" id="WP_000063665.1">
    <property type="nucleotide sequence ID" value="NZ_CP001172.1"/>
</dbReference>
<dbReference type="SMR" id="B7GV75"/>
<dbReference type="HOGENOM" id="CLU_039268_1_2_6"/>
<dbReference type="UniPathway" id="UPA00219"/>
<dbReference type="Proteomes" id="UP000006924">
    <property type="component" value="Chromosome"/>
</dbReference>
<dbReference type="GO" id="GO:0005829">
    <property type="term" value="C:cytosol"/>
    <property type="evidence" value="ECO:0007669"/>
    <property type="project" value="TreeGrafter"/>
</dbReference>
<dbReference type="GO" id="GO:0005524">
    <property type="term" value="F:ATP binding"/>
    <property type="evidence" value="ECO:0007669"/>
    <property type="project" value="UniProtKB-KW"/>
</dbReference>
<dbReference type="GO" id="GO:0008716">
    <property type="term" value="F:D-alanine-D-alanine ligase activity"/>
    <property type="evidence" value="ECO:0007669"/>
    <property type="project" value="UniProtKB-UniRule"/>
</dbReference>
<dbReference type="GO" id="GO:0046872">
    <property type="term" value="F:metal ion binding"/>
    <property type="evidence" value="ECO:0007669"/>
    <property type="project" value="UniProtKB-KW"/>
</dbReference>
<dbReference type="GO" id="GO:0071555">
    <property type="term" value="P:cell wall organization"/>
    <property type="evidence" value="ECO:0007669"/>
    <property type="project" value="UniProtKB-KW"/>
</dbReference>
<dbReference type="GO" id="GO:0009252">
    <property type="term" value="P:peptidoglycan biosynthetic process"/>
    <property type="evidence" value="ECO:0007669"/>
    <property type="project" value="UniProtKB-UniRule"/>
</dbReference>
<dbReference type="GO" id="GO:0008360">
    <property type="term" value="P:regulation of cell shape"/>
    <property type="evidence" value="ECO:0007669"/>
    <property type="project" value="UniProtKB-KW"/>
</dbReference>
<dbReference type="FunFam" id="3.30.1490.20:FF:000007">
    <property type="entry name" value="D-alanine--D-alanine ligase"/>
    <property type="match status" value="1"/>
</dbReference>
<dbReference type="FunFam" id="3.30.470.20:FF:000008">
    <property type="entry name" value="D-alanine--D-alanine ligase"/>
    <property type="match status" value="1"/>
</dbReference>
<dbReference type="Gene3D" id="3.40.50.20">
    <property type="match status" value="1"/>
</dbReference>
<dbReference type="Gene3D" id="3.30.470.20">
    <property type="entry name" value="ATP-grasp fold, B domain"/>
    <property type="match status" value="1"/>
</dbReference>
<dbReference type="HAMAP" id="MF_00047">
    <property type="entry name" value="Dala_Dala_lig"/>
    <property type="match status" value="1"/>
</dbReference>
<dbReference type="InterPro" id="IPR011761">
    <property type="entry name" value="ATP-grasp"/>
</dbReference>
<dbReference type="InterPro" id="IPR000291">
    <property type="entry name" value="D-Ala_lig_Van_CS"/>
</dbReference>
<dbReference type="InterPro" id="IPR005905">
    <property type="entry name" value="D_ala_D_ala"/>
</dbReference>
<dbReference type="InterPro" id="IPR011095">
    <property type="entry name" value="Dala_Dala_lig_C"/>
</dbReference>
<dbReference type="InterPro" id="IPR011127">
    <property type="entry name" value="Dala_Dala_lig_N"/>
</dbReference>
<dbReference type="InterPro" id="IPR016185">
    <property type="entry name" value="PreATP-grasp_dom_sf"/>
</dbReference>
<dbReference type="NCBIfam" id="TIGR01205">
    <property type="entry name" value="D_ala_D_alaTIGR"/>
    <property type="match status" value="1"/>
</dbReference>
<dbReference type="NCBIfam" id="NF002378">
    <property type="entry name" value="PRK01372.1"/>
    <property type="match status" value="1"/>
</dbReference>
<dbReference type="PANTHER" id="PTHR23132">
    <property type="entry name" value="D-ALANINE--D-ALANINE LIGASE"/>
    <property type="match status" value="1"/>
</dbReference>
<dbReference type="PANTHER" id="PTHR23132:SF23">
    <property type="entry name" value="D-ALANINE--D-ALANINE LIGASE B"/>
    <property type="match status" value="1"/>
</dbReference>
<dbReference type="Pfam" id="PF07478">
    <property type="entry name" value="Dala_Dala_lig_C"/>
    <property type="match status" value="1"/>
</dbReference>
<dbReference type="Pfam" id="PF01820">
    <property type="entry name" value="Dala_Dala_lig_N"/>
    <property type="match status" value="1"/>
</dbReference>
<dbReference type="PIRSF" id="PIRSF039102">
    <property type="entry name" value="Ddl/VanB"/>
    <property type="match status" value="1"/>
</dbReference>
<dbReference type="SUPFAM" id="SSF56059">
    <property type="entry name" value="Glutathione synthetase ATP-binding domain-like"/>
    <property type="match status" value="1"/>
</dbReference>
<dbReference type="SUPFAM" id="SSF52440">
    <property type="entry name" value="PreATP-grasp domain"/>
    <property type="match status" value="1"/>
</dbReference>
<dbReference type="PROSITE" id="PS50975">
    <property type="entry name" value="ATP_GRASP"/>
    <property type="match status" value="1"/>
</dbReference>
<dbReference type="PROSITE" id="PS00843">
    <property type="entry name" value="DALA_DALA_LIGASE_1"/>
    <property type="match status" value="1"/>
</dbReference>
<dbReference type="PROSITE" id="PS00844">
    <property type="entry name" value="DALA_DALA_LIGASE_2"/>
    <property type="match status" value="1"/>
</dbReference>
<comment type="function">
    <text evidence="2">Cell wall formation.</text>
</comment>
<comment type="catalytic activity">
    <reaction evidence="2">
        <text>2 D-alanine + ATP = D-alanyl-D-alanine + ADP + phosphate + H(+)</text>
        <dbReference type="Rhea" id="RHEA:11224"/>
        <dbReference type="ChEBI" id="CHEBI:15378"/>
        <dbReference type="ChEBI" id="CHEBI:30616"/>
        <dbReference type="ChEBI" id="CHEBI:43474"/>
        <dbReference type="ChEBI" id="CHEBI:57416"/>
        <dbReference type="ChEBI" id="CHEBI:57822"/>
        <dbReference type="ChEBI" id="CHEBI:456216"/>
        <dbReference type="EC" id="6.3.2.4"/>
    </reaction>
</comment>
<comment type="cofactor">
    <cofactor evidence="1">
        <name>Mg(2+)</name>
        <dbReference type="ChEBI" id="CHEBI:18420"/>
    </cofactor>
    <cofactor evidence="1">
        <name>Mn(2+)</name>
        <dbReference type="ChEBI" id="CHEBI:29035"/>
    </cofactor>
    <text evidence="1">Binds 2 magnesium or manganese ions per subunit.</text>
</comment>
<comment type="pathway">
    <text evidence="2">Cell wall biogenesis; peptidoglycan biosynthesis.</text>
</comment>
<comment type="subcellular location">
    <subcellularLocation>
        <location evidence="2">Cytoplasm</location>
    </subcellularLocation>
</comment>
<comment type="similarity">
    <text evidence="2">Belongs to the D-alanine--D-alanine ligase family.</text>
</comment>
<sequence length="308" mass="33346">MSNATKFGKVAVLLGGKSAERAVSLDSGQAVLDALLRSGVQAEAFDPQNRSVTELVNYDRAFIVLHGRGGEDGQIQGVLEWLNIPYTGTGVQGSAIGMDKVKTKQIWQGSDLPTAPYRIITKETDLDSVIAELGLPVIIKPVHEGSSVGMSKVEKAEDFAAAIEKATQHDAVVMAEKWITGREFTISFLNGQPLPVIRLQPPADVAFYDYEAKYQRNDVEYGIPCGLSETEEKKLQALCLRAFQAVGAEGWGRIDAMQDEQGNFWLLEVNTVPGMTSHSLVPKAAKAVGYSFDELCVAILDQTLEGTA</sequence>
<reference key="1">
    <citation type="journal article" date="2008" name="J. Bacteriol.">
        <title>Comparative genome sequence analysis of multidrug-resistant Acinetobacter baumannii.</title>
        <authorList>
            <person name="Adams M.D."/>
            <person name="Goglin K."/>
            <person name="Molyneaux N."/>
            <person name="Hujer K.M."/>
            <person name="Lavender H."/>
            <person name="Jamison J.J."/>
            <person name="MacDonald I.J."/>
            <person name="Martin K.M."/>
            <person name="Russo T."/>
            <person name="Campagnari A.A."/>
            <person name="Hujer A.M."/>
            <person name="Bonomo R.A."/>
            <person name="Gill S.R."/>
        </authorList>
    </citation>
    <scope>NUCLEOTIDE SEQUENCE [LARGE SCALE GENOMIC DNA]</scope>
    <source>
        <strain>AB307-0294</strain>
    </source>
</reference>
<proteinExistence type="inferred from homology"/>
<accession>B7GV75</accession>
<name>DDL_ACIB3</name>
<organism>
    <name type="scientific">Acinetobacter baumannii (strain AB307-0294)</name>
    <dbReference type="NCBI Taxonomy" id="557600"/>
    <lineage>
        <taxon>Bacteria</taxon>
        <taxon>Pseudomonadati</taxon>
        <taxon>Pseudomonadota</taxon>
        <taxon>Gammaproteobacteria</taxon>
        <taxon>Moraxellales</taxon>
        <taxon>Moraxellaceae</taxon>
        <taxon>Acinetobacter</taxon>
        <taxon>Acinetobacter calcoaceticus/baumannii complex</taxon>
    </lineage>
</organism>
<keyword id="KW-0067">ATP-binding</keyword>
<keyword id="KW-0133">Cell shape</keyword>
<keyword id="KW-0961">Cell wall biogenesis/degradation</keyword>
<keyword id="KW-0963">Cytoplasm</keyword>
<keyword id="KW-0436">Ligase</keyword>
<keyword id="KW-0460">Magnesium</keyword>
<keyword id="KW-0464">Manganese</keyword>
<keyword id="KW-0479">Metal-binding</keyword>
<keyword id="KW-0547">Nucleotide-binding</keyword>
<keyword id="KW-0573">Peptidoglycan synthesis</keyword>